<gene>
    <name evidence="1" type="primary">proA</name>
    <name type="ordered locus">Bcen_0174</name>
</gene>
<dbReference type="EC" id="1.2.1.41" evidence="1"/>
<dbReference type="EMBL" id="CP000378">
    <property type="protein sequence ID" value="ABF75088.1"/>
    <property type="status" value="ALT_INIT"/>
    <property type="molecule type" value="Genomic_DNA"/>
</dbReference>
<dbReference type="SMR" id="Q1BZ67"/>
<dbReference type="HOGENOM" id="CLU_030231_0_0_4"/>
<dbReference type="UniPathway" id="UPA00098">
    <property type="reaction ID" value="UER00360"/>
</dbReference>
<dbReference type="GO" id="GO:0005737">
    <property type="term" value="C:cytoplasm"/>
    <property type="evidence" value="ECO:0007669"/>
    <property type="project" value="UniProtKB-SubCell"/>
</dbReference>
<dbReference type="GO" id="GO:0004350">
    <property type="term" value="F:glutamate-5-semialdehyde dehydrogenase activity"/>
    <property type="evidence" value="ECO:0007669"/>
    <property type="project" value="UniProtKB-UniRule"/>
</dbReference>
<dbReference type="GO" id="GO:0050661">
    <property type="term" value="F:NADP binding"/>
    <property type="evidence" value="ECO:0007669"/>
    <property type="project" value="InterPro"/>
</dbReference>
<dbReference type="GO" id="GO:0055129">
    <property type="term" value="P:L-proline biosynthetic process"/>
    <property type="evidence" value="ECO:0007669"/>
    <property type="project" value="UniProtKB-UniRule"/>
</dbReference>
<dbReference type="CDD" id="cd07079">
    <property type="entry name" value="ALDH_F18-19_ProA-GPR"/>
    <property type="match status" value="1"/>
</dbReference>
<dbReference type="FunFam" id="3.40.309.10:FF:000006">
    <property type="entry name" value="Gamma-glutamyl phosphate reductase"/>
    <property type="match status" value="1"/>
</dbReference>
<dbReference type="Gene3D" id="3.40.605.10">
    <property type="entry name" value="Aldehyde Dehydrogenase, Chain A, domain 1"/>
    <property type="match status" value="1"/>
</dbReference>
<dbReference type="Gene3D" id="3.40.309.10">
    <property type="entry name" value="Aldehyde Dehydrogenase, Chain A, domain 2"/>
    <property type="match status" value="1"/>
</dbReference>
<dbReference type="HAMAP" id="MF_00412">
    <property type="entry name" value="ProA"/>
    <property type="match status" value="1"/>
</dbReference>
<dbReference type="InterPro" id="IPR016161">
    <property type="entry name" value="Ald_DH/histidinol_DH"/>
</dbReference>
<dbReference type="InterPro" id="IPR016163">
    <property type="entry name" value="Ald_DH_C"/>
</dbReference>
<dbReference type="InterPro" id="IPR016162">
    <property type="entry name" value="Ald_DH_N"/>
</dbReference>
<dbReference type="InterPro" id="IPR015590">
    <property type="entry name" value="Aldehyde_DH_dom"/>
</dbReference>
<dbReference type="InterPro" id="IPR020593">
    <property type="entry name" value="G-glutamylP_reductase_CS"/>
</dbReference>
<dbReference type="InterPro" id="IPR012134">
    <property type="entry name" value="Glu-5-SA_DH"/>
</dbReference>
<dbReference type="InterPro" id="IPR000965">
    <property type="entry name" value="GPR_dom"/>
</dbReference>
<dbReference type="NCBIfam" id="NF001221">
    <property type="entry name" value="PRK00197.1"/>
    <property type="match status" value="1"/>
</dbReference>
<dbReference type="NCBIfam" id="TIGR00407">
    <property type="entry name" value="proA"/>
    <property type="match status" value="1"/>
</dbReference>
<dbReference type="PANTHER" id="PTHR11063:SF8">
    <property type="entry name" value="DELTA-1-PYRROLINE-5-CARBOXYLATE SYNTHASE"/>
    <property type="match status" value="1"/>
</dbReference>
<dbReference type="PANTHER" id="PTHR11063">
    <property type="entry name" value="GLUTAMATE SEMIALDEHYDE DEHYDROGENASE"/>
    <property type="match status" value="1"/>
</dbReference>
<dbReference type="Pfam" id="PF00171">
    <property type="entry name" value="Aldedh"/>
    <property type="match status" value="2"/>
</dbReference>
<dbReference type="PIRSF" id="PIRSF000151">
    <property type="entry name" value="GPR"/>
    <property type="match status" value="1"/>
</dbReference>
<dbReference type="SUPFAM" id="SSF53720">
    <property type="entry name" value="ALDH-like"/>
    <property type="match status" value="1"/>
</dbReference>
<dbReference type="PROSITE" id="PS01223">
    <property type="entry name" value="PROA"/>
    <property type="match status" value="1"/>
</dbReference>
<keyword id="KW-0028">Amino-acid biosynthesis</keyword>
<keyword id="KW-0963">Cytoplasm</keyword>
<keyword id="KW-0521">NADP</keyword>
<keyword id="KW-0560">Oxidoreductase</keyword>
<keyword id="KW-0641">Proline biosynthesis</keyword>
<name>PROA_BURO1</name>
<proteinExistence type="inferred from homology"/>
<comment type="function">
    <text evidence="1">Catalyzes the NADPH-dependent reduction of L-glutamate 5-phosphate into L-glutamate 5-semialdehyde and phosphate. The product spontaneously undergoes cyclization to form 1-pyrroline-5-carboxylate.</text>
</comment>
<comment type="catalytic activity">
    <reaction evidence="1">
        <text>L-glutamate 5-semialdehyde + phosphate + NADP(+) = L-glutamyl 5-phosphate + NADPH + H(+)</text>
        <dbReference type="Rhea" id="RHEA:19541"/>
        <dbReference type="ChEBI" id="CHEBI:15378"/>
        <dbReference type="ChEBI" id="CHEBI:43474"/>
        <dbReference type="ChEBI" id="CHEBI:57783"/>
        <dbReference type="ChEBI" id="CHEBI:58066"/>
        <dbReference type="ChEBI" id="CHEBI:58274"/>
        <dbReference type="ChEBI" id="CHEBI:58349"/>
        <dbReference type="EC" id="1.2.1.41"/>
    </reaction>
</comment>
<comment type="pathway">
    <text evidence="1">Amino-acid biosynthesis; L-proline biosynthesis; L-glutamate 5-semialdehyde from L-glutamate: step 2/2.</text>
</comment>
<comment type="subcellular location">
    <subcellularLocation>
        <location evidence="1">Cytoplasm</location>
    </subcellularLocation>
</comment>
<comment type="similarity">
    <text evidence="1">Belongs to the gamma-glutamyl phosphate reductase family.</text>
</comment>
<comment type="sequence caution" evidence="2">
    <conflict type="erroneous initiation">
        <sequence resource="EMBL-CDS" id="ABF75088"/>
    </conflict>
</comment>
<evidence type="ECO:0000255" key="1">
    <source>
        <dbReference type="HAMAP-Rule" id="MF_00412"/>
    </source>
</evidence>
<evidence type="ECO:0000305" key="2"/>
<organism>
    <name type="scientific">Burkholderia orbicola (strain AU 1054)</name>
    <dbReference type="NCBI Taxonomy" id="331271"/>
    <lineage>
        <taxon>Bacteria</taxon>
        <taxon>Pseudomonadati</taxon>
        <taxon>Pseudomonadota</taxon>
        <taxon>Betaproteobacteria</taxon>
        <taxon>Burkholderiales</taxon>
        <taxon>Burkholderiaceae</taxon>
        <taxon>Burkholderia</taxon>
        <taxon>Burkholderia cepacia complex</taxon>
        <taxon>Burkholderia orbicola</taxon>
    </lineage>
</organism>
<accession>Q1BZ67</accession>
<feature type="chain" id="PRO_0000252565" description="Gamma-glutamyl phosphate reductase">
    <location>
        <begin position="1"/>
        <end position="423"/>
    </location>
</feature>
<protein>
    <recommendedName>
        <fullName evidence="1">Gamma-glutamyl phosphate reductase</fullName>
        <shortName evidence="1">GPR</shortName>
        <ecNumber evidence="1">1.2.1.41</ecNumber>
    </recommendedName>
    <alternativeName>
        <fullName evidence="1">Glutamate-5-semialdehyde dehydrogenase</fullName>
    </alternativeName>
    <alternativeName>
        <fullName evidence="1">Glutamyl-gamma-semialdehyde dehydrogenase</fullName>
        <shortName evidence="1">GSA dehydrogenase</shortName>
    </alternativeName>
</protein>
<sequence length="423" mass="45185">MDIDQYMTDLGRRARHASRAMARASTAAKNAALDAVARAIERDAQALKDANARDVARAREKGLDAAFIDRLTLSDKALNTMVEGLRQVASLADPIGEIGNLKFRPSGIQVGQMRVPLGVIGIIYESRPNVTIDAAALCLKSGNATILRGGSEALESNAALAKLIGEGLEAAGLPQDAVQVVATADRAAVGKLITMTEYVDVIVPRGGKSLIERLINEARVPMIKHLDGICHVYVDDRADLAKALTVCDNAKTHRYGTCNTMETLLVASGIAAKLLPPLGKLYRDKQVELRVDAAARAVLADAGVGPLVDVTEEDWHTEYLAPVLAIKVVDGLDAAIEHINHYGSHHTDAIVTEDHDRAMRFLREVDSASVMVNASTRFADGFEFGLGAEIGISNDKLHARGPVGLEGLTSLKYVVLGHGEGRQ</sequence>
<reference key="1">
    <citation type="submission" date="2006-05" db="EMBL/GenBank/DDBJ databases">
        <title>Complete sequence of chromosome 1 of Burkholderia cenocepacia AU 1054.</title>
        <authorList>
            <consortium name="US DOE Joint Genome Institute"/>
            <person name="Copeland A."/>
            <person name="Lucas S."/>
            <person name="Lapidus A."/>
            <person name="Barry K."/>
            <person name="Detter J.C."/>
            <person name="Glavina del Rio T."/>
            <person name="Hammon N."/>
            <person name="Israni S."/>
            <person name="Dalin E."/>
            <person name="Tice H."/>
            <person name="Pitluck S."/>
            <person name="Chain P."/>
            <person name="Malfatti S."/>
            <person name="Shin M."/>
            <person name="Vergez L."/>
            <person name="Schmutz J."/>
            <person name="Larimer F."/>
            <person name="Land M."/>
            <person name="Hauser L."/>
            <person name="Kyrpides N."/>
            <person name="Lykidis A."/>
            <person name="LiPuma J.J."/>
            <person name="Konstantinidis K."/>
            <person name="Tiedje J.M."/>
            <person name="Richardson P."/>
        </authorList>
    </citation>
    <scope>NUCLEOTIDE SEQUENCE [LARGE SCALE GENOMIC DNA]</scope>
    <source>
        <strain>AU 1054</strain>
    </source>
</reference>